<reference key="1">
    <citation type="journal article" date="2005" name="Nucleic Acids Res.">
        <title>Genome dynamics and diversity of Shigella species, the etiologic agents of bacillary dysentery.</title>
        <authorList>
            <person name="Yang F."/>
            <person name="Yang J."/>
            <person name="Zhang X."/>
            <person name="Chen L."/>
            <person name="Jiang Y."/>
            <person name="Yan Y."/>
            <person name="Tang X."/>
            <person name="Wang J."/>
            <person name="Xiong Z."/>
            <person name="Dong J."/>
            <person name="Xue Y."/>
            <person name="Zhu Y."/>
            <person name="Xu X."/>
            <person name="Sun L."/>
            <person name="Chen S."/>
            <person name="Nie H."/>
            <person name="Peng J."/>
            <person name="Xu J."/>
            <person name="Wang Y."/>
            <person name="Yuan Z."/>
            <person name="Wen Y."/>
            <person name="Yao Z."/>
            <person name="Shen Y."/>
            <person name="Qiang B."/>
            <person name="Hou Y."/>
            <person name="Yu J."/>
            <person name="Jin Q."/>
        </authorList>
    </citation>
    <scope>NUCLEOTIDE SEQUENCE [LARGE SCALE GENOMIC DNA]</scope>
    <source>
        <strain>Ss046</strain>
    </source>
</reference>
<keyword id="KW-0067">ATP-binding</keyword>
<keyword id="KW-0997">Cell inner membrane</keyword>
<keyword id="KW-1003">Cell membrane</keyword>
<keyword id="KW-0472">Membrane</keyword>
<keyword id="KW-0547">Nucleotide-binding</keyword>
<keyword id="KW-1185">Reference proteome</keyword>
<keyword id="KW-0677">Repeat</keyword>
<keyword id="KW-0762">Sugar transport</keyword>
<keyword id="KW-1278">Translocase</keyword>
<keyword id="KW-0813">Transport</keyword>
<sequence length="506" mass="56415">MVSSTTPSSGEYLLEMSGINKSFPGVKALDNVNLKVRPHSIHALMGENGAGKSTLLKCLFGIYQKDSGTILFQGKEIDFHSAKEALENGISMVHQELNLVLQRSVMDNMWLGRYPTKGMFVDQDKMYRETKAIFDELDIDIDPRARVGTLSVSQMQMIEIAKAFSYNAKIVIMDEPTSSLTEKEVNHLFTIIRKLKERGCGIVYISHKMEEIFQLCDEVTVLRDGQWIATEPLAGLTMDKIIAMMVGRSLNQRFPDKENKPGEVILEVRNLTSLRQPSIRDVSFDLHKGEILGIAGLVGAKRTDIVETLFGIREKSAGTITLHGKQINNHNANEAINHGFALVTEERRSTGIYAYLDIGFNSLISNIRNYKNKVGLLDNSRMKSDTQWVIDSMRVKTPGHRTQIGSLSGGNQQKVIIGRWLLTQPEILMLDEPTRGIDVGAKFEIYQLIAELAKKGKGIIIISSEMPELLGITDRILVMSNGLVSGIVDTKTTTQNEILRLASLHL</sequence>
<name>MGLA_SHISS</name>
<feature type="chain" id="PRO_0000261374" description="Galactose/methyl galactoside import ATP-binding protein MglA">
    <location>
        <begin position="1"/>
        <end position="506"/>
    </location>
</feature>
<feature type="domain" description="ABC transporter 1" evidence="1">
    <location>
        <begin position="14"/>
        <end position="249"/>
    </location>
</feature>
<feature type="domain" description="ABC transporter 2" evidence="1">
    <location>
        <begin position="264"/>
        <end position="506"/>
    </location>
</feature>
<feature type="binding site" evidence="1">
    <location>
        <begin position="46"/>
        <end position="53"/>
    </location>
    <ligand>
        <name>ATP</name>
        <dbReference type="ChEBI" id="CHEBI:30616"/>
    </ligand>
</feature>
<organism>
    <name type="scientific">Shigella sonnei (strain Ss046)</name>
    <dbReference type="NCBI Taxonomy" id="300269"/>
    <lineage>
        <taxon>Bacteria</taxon>
        <taxon>Pseudomonadati</taxon>
        <taxon>Pseudomonadota</taxon>
        <taxon>Gammaproteobacteria</taxon>
        <taxon>Enterobacterales</taxon>
        <taxon>Enterobacteriaceae</taxon>
        <taxon>Shigella</taxon>
    </lineage>
</organism>
<dbReference type="EC" id="7.5.2.11" evidence="1"/>
<dbReference type="EMBL" id="CP000038">
    <property type="protein sequence ID" value="AAZ88855.1"/>
    <property type="molecule type" value="Genomic_DNA"/>
</dbReference>
<dbReference type="RefSeq" id="WP_000255039.1">
    <property type="nucleotide sequence ID" value="NC_007384.1"/>
</dbReference>
<dbReference type="SMR" id="Q3Z057"/>
<dbReference type="GeneID" id="75172277"/>
<dbReference type="KEGG" id="ssn:SSON_2205"/>
<dbReference type="HOGENOM" id="CLU_000604_92_3_6"/>
<dbReference type="Proteomes" id="UP000002529">
    <property type="component" value="Chromosome"/>
</dbReference>
<dbReference type="GO" id="GO:0005886">
    <property type="term" value="C:plasma membrane"/>
    <property type="evidence" value="ECO:0007669"/>
    <property type="project" value="UniProtKB-SubCell"/>
</dbReference>
<dbReference type="GO" id="GO:0005524">
    <property type="term" value="F:ATP binding"/>
    <property type="evidence" value="ECO:0007669"/>
    <property type="project" value="UniProtKB-KW"/>
</dbReference>
<dbReference type="GO" id="GO:0016887">
    <property type="term" value="F:ATP hydrolysis activity"/>
    <property type="evidence" value="ECO:0007669"/>
    <property type="project" value="InterPro"/>
</dbReference>
<dbReference type="CDD" id="cd03216">
    <property type="entry name" value="ABC_Carb_Monos_I"/>
    <property type="match status" value="1"/>
</dbReference>
<dbReference type="CDD" id="cd03215">
    <property type="entry name" value="ABC_Carb_Monos_II"/>
    <property type="match status" value="1"/>
</dbReference>
<dbReference type="FunFam" id="3.40.50.300:FF:000126">
    <property type="entry name" value="Galactose/methyl galactoside import ATP-binding protein MglA"/>
    <property type="match status" value="1"/>
</dbReference>
<dbReference type="FunFam" id="3.40.50.300:FF:000127">
    <property type="entry name" value="Ribose import ATP-binding protein RbsA"/>
    <property type="match status" value="1"/>
</dbReference>
<dbReference type="Gene3D" id="3.40.50.300">
    <property type="entry name" value="P-loop containing nucleotide triphosphate hydrolases"/>
    <property type="match status" value="2"/>
</dbReference>
<dbReference type="InterPro" id="IPR003593">
    <property type="entry name" value="AAA+_ATPase"/>
</dbReference>
<dbReference type="InterPro" id="IPR050107">
    <property type="entry name" value="ABC_carbohydrate_import_ATPase"/>
</dbReference>
<dbReference type="InterPro" id="IPR003439">
    <property type="entry name" value="ABC_transporter-like_ATP-bd"/>
</dbReference>
<dbReference type="InterPro" id="IPR017871">
    <property type="entry name" value="ABC_transporter-like_CS"/>
</dbReference>
<dbReference type="InterPro" id="IPR027417">
    <property type="entry name" value="P-loop_NTPase"/>
</dbReference>
<dbReference type="NCBIfam" id="NF008215">
    <property type="entry name" value="PRK10982.1"/>
    <property type="match status" value="1"/>
</dbReference>
<dbReference type="PANTHER" id="PTHR43790">
    <property type="entry name" value="CARBOHYDRATE TRANSPORT ATP-BINDING PROTEIN MG119-RELATED"/>
    <property type="match status" value="1"/>
</dbReference>
<dbReference type="PANTHER" id="PTHR43790:SF7">
    <property type="entry name" value="GALACTOSE_METHYL GALACTOSIDE IMPORT ATP-BINDING PROTEIN MGLA"/>
    <property type="match status" value="1"/>
</dbReference>
<dbReference type="Pfam" id="PF00005">
    <property type="entry name" value="ABC_tran"/>
    <property type="match status" value="2"/>
</dbReference>
<dbReference type="SMART" id="SM00382">
    <property type="entry name" value="AAA"/>
    <property type="match status" value="2"/>
</dbReference>
<dbReference type="SUPFAM" id="SSF52540">
    <property type="entry name" value="P-loop containing nucleoside triphosphate hydrolases"/>
    <property type="match status" value="2"/>
</dbReference>
<dbReference type="PROSITE" id="PS00211">
    <property type="entry name" value="ABC_TRANSPORTER_1"/>
    <property type="match status" value="1"/>
</dbReference>
<dbReference type="PROSITE" id="PS50893">
    <property type="entry name" value="ABC_TRANSPORTER_2"/>
    <property type="match status" value="2"/>
</dbReference>
<dbReference type="PROSITE" id="PS51260">
    <property type="entry name" value="MGLA"/>
    <property type="match status" value="1"/>
</dbReference>
<evidence type="ECO:0000255" key="1">
    <source>
        <dbReference type="HAMAP-Rule" id="MF_01717"/>
    </source>
</evidence>
<proteinExistence type="inferred from homology"/>
<accession>Q3Z057</accession>
<gene>
    <name evidence="1" type="primary">mglA</name>
    <name type="ordered locus">SSON_2205</name>
</gene>
<protein>
    <recommendedName>
        <fullName evidence="1">Galactose/methyl galactoside import ATP-binding protein MglA</fullName>
        <ecNumber evidence="1">7.5.2.11</ecNumber>
    </recommendedName>
</protein>
<comment type="function">
    <text evidence="1">Part of the ABC transporter complex MglABC involved in galactose/methyl galactoside import. Responsible for energy coupling to the transport system.</text>
</comment>
<comment type="catalytic activity">
    <reaction evidence="1">
        <text>D-galactose(out) + ATP + H2O = D-galactose(in) + ADP + phosphate + H(+)</text>
        <dbReference type="Rhea" id="RHEA:60156"/>
        <dbReference type="ChEBI" id="CHEBI:4139"/>
        <dbReference type="ChEBI" id="CHEBI:15377"/>
        <dbReference type="ChEBI" id="CHEBI:15378"/>
        <dbReference type="ChEBI" id="CHEBI:30616"/>
        <dbReference type="ChEBI" id="CHEBI:43474"/>
        <dbReference type="ChEBI" id="CHEBI:456216"/>
        <dbReference type="EC" id="7.5.2.11"/>
    </reaction>
    <physiologicalReaction direction="left-to-right" evidence="1">
        <dbReference type="Rhea" id="RHEA:60157"/>
    </physiologicalReaction>
</comment>
<comment type="catalytic activity">
    <reaction evidence="1">
        <text>methyl beta-D-galactoside(out) + ATP + H2O = methyl beta-D-galactoside(in) + ADP + phosphate + H(+)</text>
        <dbReference type="Rhea" id="RHEA:72531"/>
        <dbReference type="ChEBI" id="CHEBI:15377"/>
        <dbReference type="ChEBI" id="CHEBI:15378"/>
        <dbReference type="ChEBI" id="CHEBI:17540"/>
        <dbReference type="ChEBI" id="CHEBI:30616"/>
        <dbReference type="ChEBI" id="CHEBI:43474"/>
        <dbReference type="ChEBI" id="CHEBI:456216"/>
    </reaction>
    <physiologicalReaction direction="left-to-right" evidence="1">
        <dbReference type="Rhea" id="RHEA:72532"/>
    </physiologicalReaction>
</comment>
<comment type="subunit">
    <text evidence="1">The complex is composed of one ATP-binding protein (MglA), two transmembrane proteins (MglC) and a solute-binding protein (MglB).</text>
</comment>
<comment type="subcellular location">
    <subcellularLocation>
        <location evidence="1">Cell inner membrane</location>
        <topology evidence="1">Peripheral membrane protein</topology>
    </subcellularLocation>
</comment>
<comment type="similarity">
    <text evidence="1">Belongs to the ABC transporter superfamily. Galactose/methyl galactoside importer (TC 3.A.1.2.3) family.</text>
</comment>